<dbReference type="EMBL" id="CP001402">
    <property type="protein sequence ID" value="ACR42117.1"/>
    <property type="molecule type" value="Genomic_DNA"/>
</dbReference>
<dbReference type="RefSeq" id="WP_012711513.1">
    <property type="nucleotide sequence ID" value="NC_012726.1"/>
</dbReference>
<dbReference type="SMR" id="C4KHQ3"/>
<dbReference type="GeneID" id="84053119"/>
<dbReference type="KEGG" id="sid:M164_1516"/>
<dbReference type="HOGENOM" id="CLU_128576_0_0_2"/>
<dbReference type="Proteomes" id="UP000001479">
    <property type="component" value="Chromosome"/>
</dbReference>
<dbReference type="GO" id="GO:0009347">
    <property type="term" value="C:aspartate carbamoyltransferase complex"/>
    <property type="evidence" value="ECO:0007669"/>
    <property type="project" value="InterPro"/>
</dbReference>
<dbReference type="GO" id="GO:0046872">
    <property type="term" value="F:metal ion binding"/>
    <property type="evidence" value="ECO:0007669"/>
    <property type="project" value="UniProtKB-KW"/>
</dbReference>
<dbReference type="GO" id="GO:0006207">
    <property type="term" value="P:'de novo' pyrimidine nucleobase biosynthetic process"/>
    <property type="evidence" value="ECO:0007669"/>
    <property type="project" value="InterPro"/>
</dbReference>
<dbReference type="GO" id="GO:0006221">
    <property type="term" value="P:pyrimidine nucleotide biosynthetic process"/>
    <property type="evidence" value="ECO:0007669"/>
    <property type="project" value="UniProtKB-UniRule"/>
</dbReference>
<dbReference type="Gene3D" id="2.30.30.20">
    <property type="entry name" value="Aspartate carbamoyltransferase regulatory subunit, C-terminal domain"/>
    <property type="match status" value="1"/>
</dbReference>
<dbReference type="Gene3D" id="3.30.70.140">
    <property type="entry name" value="Aspartate carbamoyltransferase regulatory subunit, N-terminal domain"/>
    <property type="match status" value="1"/>
</dbReference>
<dbReference type="HAMAP" id="MF_00002">
    <property type="entry name" value="Asp_carb_tr_reg"/>
    <property type="match status" value="1"/>
</dbReference>
<dbReference type="InterPro" id="IPR020545">
    <property type="entry name" value="Asp_carbamoyltransf_reg_N"/>
</dbReference>
<dbReference type="InterPro" id="IPR002801">
    <property type="entry name" value="Asp_carbamoylTrfase_reg"/>
</dbReference>
<dbReference type="InterPro" id="IPR020542">
    <property type="entry name" value="Asp_carbamoyltrfase_reg_C"/>
</dbReference>
<dbReference type="InterPro" id="IPR036792">
    <property type="entry name" value="Asp_carbatrfase_reg_C_sf"/>
</dbReference>
<dbReference type="InterPro" id="IPR036793">
    <property type="entry name" value="Asp_carbatrfase_reg_N_sf"/>
</dbReference>
<dbReference type="NCBIfam" id="TIGR00240">
    <property type="entry name" value="ATCase_reg"/>
    <property type="match status" value="1"/>
</dbReference>
<dbReference type="PANTHER" id="PTHR35805">
    <property type="entry name" value="ASPARTATE CARBAMOYLTRANSFERASE REGULATORY CHAIN"/>
    <property type="match status" value="1"/>
</dbReference>
<dbReference type="PANTHER" id="PTHR35805:SF1">
    <property type="entry name" value="ASPARTATE CARBAMOYLTRANSFERASE REGULATORY CHAIN"/>
    <property type="match status" value="1"/>
</dbReference>
<dbReference type="Pfam" id="PF01948">
    <property type="entry name" value="PyrI"/>
    <property type="match status" value="1"/>
</dbReference>
<dbReference type="Pfam" id="PF02748">
    <property type="entry name" value="PyrI_C"/>
    <property type="match status" value="1"/>
</dbReference>
<dbReference type="SUPFAM" id="SSF57825">
    <property type="entry name" value="Aspartate carbamoyltransferase, Regulatory-chain, C-terminal domain"/>
    <property type="match status" value="1"/>
</dbReference>
<dbReference type="SUPFAM" id="SSF54893">
    <property type="entry name" value="Aspartate carbamoyltransferase, Regulatory-chain, N-terminal domain"/>
    <property type="match status" value="1"/>
</dbReference>
<proteinExistence type="inferred from homology"/>
<reference key="1">
    <citation type="journal article" date="2009" name="Proc. Natl. Acad. Sci. U.S.A.">
        <title>Biogeography of the Sulfolobus islandicus pan-genome.</title>
        <authorList>
            <person name="Reno M.L."/>
            <person name="Held N.L."/>
            <person name="Fields C.J."/>
            <person name="Burke P.V."/>
            <person name="Whitaker R.J."/>
        </authorList>
    </citation>
    <scope>NUCLEOTIDE SEQUENCE [LARGE SCALE GENOMIC DNA]</scope>
    <source>
        <strain>M.16.4 / Kamchatka #3</strain>
    </source>
</reference>
<feature type="chain" id="PRO_1000201615" description="Aspartate carbamoyltransferase regulatory chain">
    <location>
        <begin position="1"/>
        <end position="159"/>
    </location>
</feature>
<feature type="binding site" evidence="1">
    <location>
        <position position="113"/>
    </location>
    <ligand>
        <name>Zn(2+)</name>
        <dbReference type="ChEBI" id="CHEBI:29105"/>
    </ligand>
</feature>
<feature type="binding site" evidence="1">
    <location>
        <position position="118"/>
    </location>
    <ligand>
        <name>Zn(2+)</name>
        <dbReference type="ChEBI" id="CHEBI:29105"/>
    </ligand>
</feature>
<feature type="binding site" evidence="1">
    <location>
        <position position="142"/>
    </location>
    <ligand>
        <name>Zn(2+)</name>
        <dbReference type="ChEBI" id="CHEBI:29105"/>
    </ligand>
</feature>
<feature type="binding site" evidence="1">
    <location>
        <position position="145"/>
    </location>
    <ligand>
        <name>Zn(2+)</name>
        <dbReference type="ChEBI" id="CHEBI:29105"/>
    </ligand>
</feature>
<gene>
    <name evidence="1" type="primary">pyrI</name>
    <name type="ordered locus">M164_1516</name>
</gene>
<evidence type="ECO:0000255" key="1">
    <source>
        <dbReference type="HAMAP-Rule" id="MF_00002"/>
    </source>
</evidence>
<accession>C4KHQ3</accession>
<organism>
    <name type="scientific">Saccharolobus islandicus (strain M.16.4 / Kamchatka #3)</name>
    <name type="common">Sulfolobus islandicus</name>
    <dbReference type="NCBI Taxonomy" id="426118"/>
    <lineage>
        <taxon>Archaea</taxon>
        <taxon>Thermoproteota</taxon>
        <taxon>Thermoprotei</taxon>
        <taxon>Sulfolobales</taxon>
        <taxon>Sulfolobaceae</taxon>
        <taxon>Saccharolobus</taxon>
    </lineage>
</organism>
<sequence length="159" mass="17981">MISSSKRDELIVSKIRKGTVIDHIPAGRALAVLRILGIRGSEGYRVALVMNVESKKIGRKDIVKIEDRVIDEKEASLITLIAPSATINIIRDYVVTEKRHLEVPKQIRGLIKCPNPQCITNNDVEAESRFTTISIKPLKLKCEYCEIYITEEDVIRQIL</sequence>
<protein>
    <recommendedName>
        <fullName evidence="1">Aspartate carbamoyltransferase regulatory chain</fullName>
    </recommendedName>
</protein>
<comment type="function">
    <text evidence="1">Involved in allosteric regulation of aspartate carbamoyltransferase.</text>
</comment>
<comment type="cofactor">
    <cofactor evidence="1">
        <name>Zn(2+)</name>
        <dbReference type="ChEBI" id="CHEBI:29105"/>
    </cofactor>
    <text evidence="1">Binds 1 zinc ion per subunit.</text>
</comment>
<comment type="subunit">
    <text evidence="1">Contains catalytic and regulatory chains.</text>
</comment>
<comment type="similarity">
    <text evidence="1">Belongs to the PyrI family.</text>
</comment>
<keyword id="KW-0479">Metal-binding</keyword>
<keyword id="KW-0665">Pyrimidine biosynthesis</keyword>
<keyword id="KW-0862">Zinc</keyword>
<name>PYRI_SACI6</name>